<feature type="initiator methionine" description="Removed" evidence="2">
    <location>
        <position position="1"/>
    </location>
</feature>
<feature type="chain" id="PRO_0000206155" description="14 kDa phosphohistidine phosphatase">
    <location>
        <begin position="2"/>
        <end position="125"/>
    </location>
</feature>
<feature type="active site" description="Proton acceptor" evidence="2">
    <location>
        <position position="53"/>
    </location>
</feature>
<feature type="binding site" evidence="2">
    <location>
        <position position="21"/>
    </location>
    <ligand>
        <name>substrate</name>
    </ligand>
</feature>
<feature type="binding site" evidence="2">
    <location>
        <begin position="94"/>
        <end position="96"/>
    </location>
    <ligand>
        <name>substrate</name>
    </ligand>
</feature>
<feature type="modified residue" description="N-acetylalanine" evidence="2">
    <location>
        <position position="2"/>
    </location>
</feature>
<comment type="function">
    <text evidence="3">Exhibits phosphohistidine phosphatase activity.</text>
</comment>
<comment type="function">
    <text evidence="4">May have a significant involvement in neuronal signaling.</text>
</comment>
<comment type="catalytic activity">
    <reaction evidence="3">
        <text>N(pros)-phospho-L-histidyl-[protein] + H2O = L-histidyl-[protein] + phosphate</text>
        <dbReference type="Rhea" id="RHEA:47964"/>
        <dbReference type="Rhea" id="RHEA-COMP:9745"/>
        <dbReference type="Rhea" id="RHEA-COMP:9746"/>
        <dbReference type="ChEBI" id="CHEBI:15377"/>
        <dbReference type="ChEBI" id="CHEBI:29979"/>
        <dbReference type="ChEBI" id="CHEBI:43474"/>
        <dbReference type="ChEBI" id="CHEBI:64837"/>
        <dbReference type="EC" id="3.9.1.3"/>
    </reaction>
</comment>
<comment type="catalytic activity">
    <reaction evidence="3">
        <text>N(tele)-phospho-L-histidyl-[protein] + H2O = L-histidyl-[protein] + phosphate</text>
        <dbReference type="Rhea" id="RHEA:47960"/>
        <dbReference type="Rhea" id="RHEA-COMP:9745"/>
        <dbReference type="Rhea" id="RHEA-COMP:10719"/>
        <dbReference type="ChEBI" id="CHEBI:15377"/>
        <dbReference type="ChEBI" id="CHEBI:29979"/>
        <dbReference type="ChEBI" id="CHEBI:43474"/>
        <dbReference type="ChEBI" id="CHEBI:83586"/>
        <dbReference type="EC" id="3.9.1.3"/>
    </reaction>
</comment>
<comment type="subunit">
    <text evidence="3">Monomer.</text>
</comment>
<comment type="subcellular location">
    <subcellularLocation>
        <location evidence="1">Cytoplasm</location>
    </subcellularLocation>
</comment>
<comment type="mass spectrometry"/>
<comment type="similarity">
    <text evidence="5">Belongs to the janus family.</text>
</comment>
<sequence>MAAAGLAQIPDVDIDSDGVFKYVLIRVHAAPPSEAPGGESKDIVRGYKWAEYHADIYDKVSGELQKKGHDCECLGGGRISHQSQDRKIHVYGYSMGYGRAQHSVSTEKIRAKYPDYEVTWADDGY</sequence>
<gene>
    <name type="primary">PHPT1</name>
    <name type="synonym">PHP14</name>
</gene>
<proteinExistence type="evidence at protein level"/>
<organism evidence="5">
    <name type="scientific">Oryctolagus cuniculus</name>
    <name type="common">Rabbit</name>
    <dbReference type="NCBI Taxonomy" id="9986"/>
    <lineage>
        <taxon>Eukaryota</taxon>
        <taxon>Metazoa</taxon>
        <taxon>Chordata</taxon>
        <taxon>Craniata</taxon>
        <taxon>Vertebrata</taxon>
        <taxon>Euteleostomi</taxon>
        <taxon>Mammalia</taxon>
        <taxon>Eutheria</taxon>
        <taxon>Euarchontoglires</taxon>
        <taxon>Glires</taxon>
        <taxon>Lagomorpha</taxon>
        <taxon>Leporidae</taxon>
        <taxon>Oryctolagus</taxon>
    </lineage>
</organism>
<protein>
    <recommendedName>
        <fullName>14 kDa phosphohistidine phosphatase</fullName>
        <ecNumber evidence="3">3.9.1.3</ecNumber>
    </recommendedName>
    <alternativeName>
        <fullName>Phosphohistidine phosphatase 1</fullName>
        <shortName>PHPT1</shortName>
    </alternativeName>
    <alternativeName>
        <fullName evidence="4">Protein histidine phosphatase</fullName>
        <shortName>PHP</shortName>
    </alternativeName>
</protein>
<name>PHP14_RABIT</name>
<evidence type="ECO:0000250" key="1"/>
<evidence type="ECO:0000250" key="2">
    <source>
        <dbReference type="UniProtKB" id="Q9NRX4"/>
    </source>
</evidence>
<evidence type="ECO:0000269" key="3">
    <source>
    </source>
</evidence>
<evidence type="ECO:0000303" key="4">
    <source>
    </source>
</evidence>
<evidence type="ECO:0000305" key="5"/>
<keyword id="KW-0007">Acetylation</keyword>
<keyword id="KW-0963">Cytoplasm</keyword>
<keyword id="KW-0903">Direct protein sequencing</keyword>
<keyword id="KW-0378">Hydrolase</keyword>
<keyword id="KW-0904">Protein phosphatase</keyword>
<keyword id="KW-1185">Reference proteome</keyword>
<dbReference type="EC" id="3.9.1.3" evidence="3"/>
<dbReference type="SMR" id="P83468"/>
<dbReference type="FunCoup" id="P83468">
    <property type="interactions" value="1289"/>
</dbReference>
<dbReference type="InParanoid" id="P83468"/>
<dbReference type="OrthoDB" id="10249612at2759"/>
<dbReference type="BRENDA" id="3.9.1.3">
    <property type="organism ID" value="1749"/>
</dbReference>
<dbReference type="Proteomes" id="UP000001811">
    <property type="component" value="Unplaced"/>
</dbReference>
<dbReference type="GO" id="GO:0005829">
    <property type="term" value="C:cytosol"/>
    <property type="evidence" value="ECO:0007669"/>
    <property type="project" value="TreeGrafter"/>
</dbReference>
<dbReference type="GO" id="GO:0101006">
    <property type="term" value="F:protein histidine phosphatase activity"/>
    <property type="evidence" value="ECO:0007669"/>
    <property type="project" value="UniProtKB-EC"/>
</dbReference>
<dbReference type="FunFam" id="3.50.20.20:FF:000001">
    <property type="entry name" value="14 kDa phosphohistidine phosphatase"/>
    <property type="match status" value="1"/>
</dbReference>
<dbReference type="Gene3D" id="3.50.20.20">
    <property type="entry name" value="Janus/Ocnus"/>
    <property type="match status" value="1"/>
</dbReference>
<dbReference type="InterPro" id="IPR007702">
    <property type="entry name" value="Janus"/>
</dbReference>
<dbReference type="InterPro" id="IPR038596">
    <property type="entry name" value="Janus_sf"/>
</dbReference>
<dbReference type="PANTHER" id="PTHR12258:SF10">
    <property type="entry name" value="14 KDA PHOSPHOHISTIDINE PHOSPHATASE"/>
    <property type="match status" value="1"/>
</dbReference>
<dbReference type="PANTHER" id="PTHR12258">
    <property type="entry name" value="JANUS-A/JANUS-B"/>
    <property type="match status" value="1"/>
</dbReference>
<dbReference type="Pfam" id="PF05005">
    <property type="entry name" value="Ocnus"/>
    <property type="match status" value="1"/>
</dbReference>
<dbReference type="SUPFAM" id="SSF143724">
    <property type="entry name" value="PHP14-like"/>
    <property type="match status" value="1"/>
</dbReference>
<accession>P83468</accession>
<reference key="1">
    <citation type="journal article" date="2002" name="J. Cereb. Blood Flow Metab.">
        <title>Protein histidine phosphatase: a novel enzyme with potency for neuronal signaling.</title>
        <authorList>
            <person name="Klumpp S."/>
            <person name="Hermesmeier J."/>
            <person name="Selke D."/>
            <person name="Bechmann G."/>
            <person name="van den Brulle J."/>
            <person name="Weidner G."/>
            <person name="Scharm B."/>
            <person name="Guessow D."/>
            <person name="Baumeister R."/>
            <person name="Kellner R."/>
            <person name="Krieglstein J."/>
        </authorList>
    </citation>
    <scope>NUCLEOTIDE SEQUENCE</scope>
    <scope>PROTEIN SEQUENCE OF 2-45; 49-66; 79-99 AND 113-125</scope>
    <scope>FUNCTION</scope>
    <scope>CATALYTIC ACTIVITY</scope>
    <scope>SUBUNIT</scope>
    <scope>MASS SPECTROMETRY</scope>
    <source>
        <tissue>Liver</tissue>
    </source>
</reference>
<reference key="2">
    <citation type="journal article" date="2003" name="J. Cereb. Blood Flow Metab.">
        <authorList>
            <person name="Klumpp S."/>
            <person name="Hermesmeier J."/>
            <person name="Selke D."/>
            <person name="Bechmann G."/>
            <person name="van den Brulle J."/>
            <person name="Weidner G."/>
            <person name="Scharm B."/>
            <person name="Guessow D."/>
            <person name="Baumeister R."/>
            <person name="Kellner R."/>
            <person name="Krieglstein J."/>
        </authorList>
    </citation>
    <scope>ERRATUM OF PUBMED:12468887</scope>
</reference>